<evidence type="ECO:0000255" key="1">
    <source>
        <dbReference type="HAMAP-Rule" id="MF_00445"/>
    </source>
</evidence>
<sequence>MDNLNFILPEIFISLSIMFLLLLGVYKKNSSNIVHNLAVGSLLITGILIFNNPLDQNISLFNDGYVVDNLSSFMKILTILGGAFVLSISTRYLKIFKIFLIEYPVLILSSILGMMVMISSNDLMVFYIGLELQSLALYVLASFNRDQLKSSESGLKYFVLSALSSGLLLYGCSLVYGFSGSTNFNVIGDLMNSSHYGLTFGIVFILVGLAFKISAVPFHMWAPDVYEGSPTAVTLFFAIVPKVAALTVFIRFLYIPFVNMIDQWQPILIFLSIASMIFGAIAAIGQNNLKRLIAYSSIGHMGYALAGLSTGSNEGIQSSIVYMSIYLVMNLAFFSCLLMLKRNDAYYETIDDLSGLSKNHPILSLSLLAILFSLAGIPPLAGFFAKFYIFKAVIEQSMYFLAIVGLLSTVIAAFYYLKIIKVIYFDKEKESYDTDHNIWLKGSLTFSTLLILLYFIFPSKLLEIVSRINII</sequence>
<comment type="function">
    <text evidence="1">NDH-1 shuttles electrons from NADH, via FMN and iron-sulfur (Fe-S) centers, to quinones in the respiratory chain. The immediate electron acceptor for the enzyme in this species is believed to be ubiquinone. Couples the redox reaction to proton translocation (for every two electrons transferred, four hydrogen ions are translocated across the cytoplasmic membrane), and thus conserves the redox energy in a proton gradient.</text>
</comment>
<comment type="catalytic activity">
    <reaction evidence="1">
        <text>a quinone + NADH + 5 H(+)(in) = a quinol + NAD(+) + 4 H(+)(out)</text>
        <dbReference type="Rhea" id="RHEA:57888"/>
        <dbReference type="ChEBI" id="CHEBI:15378"/>
        <dbReference type="ChEBI" id="CHEBI:24646"/>
        <dbReference type="ChEBI" id="CHEBI:57540"/>
        <dbReference type="ChEBI" id="CHEBI:57945"/>
        <dbReference type="ChEBI" id="CHEBI:132124"/>
    </reaction>
</comment>
<comment type="subunit">
    <text evidence="1">NDH-1 is composed of 14 different subunits. Subunits NuoA, H, J, K, L, M, N constitute the membrane sector of the complex.</text>
</comment>
<comment type="subcellular location">
    <subcellularLocation>
        <location evidence="1">Cell inner membrane</location>
        <topology evidence="1">Multi-pass membrane protein</topology>
    </subcellularLocation>
</comment>
<comment type="similarity">
    <text evidence="1">Belongs to the complex I subunit 2 family.</text>
</comment>
<dbReference type="EC" id="7.1.1.-" evidence="1"/>
<dbReference type="EMBL" id="CP000084">
    <property type="protein sequence ID" value="AAZ21711.1"/>
    <property type="molecule type" value="Genomic_DNA"/>
</dbReference>
<dbReference type="RefSeq" id="WP_011282020.1">
    <property type="nucleotide sequence ID" value="NC_007205.1"/>
</dbReference>
<dbReference type="SMR" id="Q4FM78"/>
<dbReference type="STRING" id="335992.SAR11_0897"/>
<dbReference type="GeneID" id="66295391"/>
<dbReference type="KEGG" id="pub:SAR11_0897"/>
<dbReference type="eggNOG" id="COG1007">
    <property type="taxonomic scope" value="Bacteria"/>
</dbReference>
<dbReference type="HOGENOM" id="CLU_007100_1_3_5"/>
<dbReference type="OrthoDB" id="9811718at2"/>
<dbReference type="Proteomes" id="UP000002528">
    <property type="component" value="Chromosome"/>
</dbReference>
<dbReference type="GO" id="GO:0005886">
    <property type="term" value="C:plasma membrane"/>
    <property type="evidence" value="ECO:0007669"/>
    <property type="project" value="UniProtKB-SubCell"/>
</dbReference>
<dbReference type="GO" id="GO:0008137">
    <property type="term" value="F:NADH dehydrogenase (ubiquinone) activity"/>
    <property type="evidence" value="ECO:0007669"/>
    <property type="project" value="InterPro"/>
</dbReference>
<dbReference type="GO" id="GO:0050136">
    <property type="term" value="F:NADH:ubiquinone reductase (non-electrogenic) activity"/>
    <property type="evidence" value="ECO:0007669"/>
    <property type="project" value="UniProtKB-UniRule"/>
</dbReference>
<dbReference type="GO" id="GO:0048038">
    <property type="term" value="F:quinone binding"/>
    <property type="evidence" value="ECO:0007669"/>
    <property type="project" value="UniProtKB-KW"/>
</dbReference>
<dbReference type="GO" id="GO:0042773">
    <property type="term" value="P:ATP synthesis coupled electron transport"/>
    <property type="evidence" value="ECO:0007669"/>
    <property type="project" value="InterPro"/>
</dbReference>
<dbReference type="HAMAP" id="MF_00445">
    <property type="entry name" value="NDH1_NuoN_1"/>
    <property type="match status" value="1"/>
</dbReference>
<dbReference type="InterPro" id="IPR010096">
    <property type="entry name" value="NADH-Q_OxRdtase_suN/2"/>
</dbReference>
<dbReference type="InterPro" id="IPR001750">
    <property type="entry name" value="ND/Mrp_TM"/>
</dbReference>
<dbReference type="NCBIfam" id="TIGR01770">
    <property type="entry name" value="NDH_I_N"/>
    <property type="match status" value="1"/>
</dbReference>
<dbReference type="NCBIfam" id="NF004440">
    <property type="entry name" value="PRK05777.1-3"/>
    <property type="match status" value="1"/>
</dbReference>
<dbReference type="PANTHER" id="PTHR22773">
    <property type="entry name" value="NADH DEHYDROGENASE"/>
    <property type="match status" value="1"/>
</dbReference>
<dbReference type="Pfam" id="PF00361">
    <property type="entry name" value="Proton_antipo_M"/>
    <property type="match status" value="1"/>
</dbReference>
<dbReference type="PRINTS" id="PR01434">
    <property type="entry name" value="NADHDHGNASE5"/>
</dbReference>
<name>NUON_PELUB</name>
<accession>Q4FM78</accession>
<feature type="chain" id="PRO_0000391199" description="NADH-quinone oxidoreductase subunit N">
    <location>
        <begin position="1"/>
        <end position="471"/>
    </location>
</feature>
<feature type="transmembrane region" description="Helical" evidence="1">
    <location>
        <begin position="6"/>
        <end position="26"/>
    </location>
</feature>
<feature type="transmembrane region" description="Helical" evidence="1">
    <location>
        <begin position="30"/>
        <end position="50"/>
    </location>
</feature>
<feature type="transmembrane region" description="Helical" evidence="1">
    <location>
        <begin position="70"/>
        <end position="90"/>
    </location>
</feature>
<feature type="transmembrane region" description="Helical" evidence="1">
    <location>
        <begin position="98"/>
        <end position="118"/>
    </location>
</feature>
<feature type="transmembrane region" description="Helical" evidence="1">
    <location>
        <begin position="123"/>
        <end position="143"/>
    </location>
</feature>
<feature type="transmembrane region" description="Helical" evidence="1">
    <location>
        <begin position="158"/>
        <end position="178"/>
    </location>
</feature>
<feature type="transmembrane region" description="Helical" evidence="1">
    <location>
        <begin position="198"/>
        <end position="218"/>
    </location>
</feature>
<feature type="transmembrane region" description="Helical" evidence="1">
    <location>
        <begin position="230"/>
        <end position="250"/>
    </location>
</feature>
<feature type="transmembrane region" description="Helical" evidence="1">
    <location>
        <begin position="264"/>
        <end position="284"/>
    </location>
</feature>
<feature type="transmembrane region" description="Helical" evidence="1">
    <location>
        <begin position="292"/>
        <end position="312"/>
    </location>
</feature>
<feature type="transmembrane region" description="Helical" evidence="1">
    <location>
        <begin position="320"/>
        <end position="340"/>
    </location>
</feature>
<feature type="transmembrane region" description="Helical" evidence="1">
    <location>
        <begin position="365"/>
        <end position="385"/>
    </location>
</feature>
<feature type="transmembrane region" description="Helical" evidence="1">
    <location>
        <begin position="400"/>
        <end position="420"/>
    </location>
</feature>
<feature type="transmembrane region" description="Helical" evidence="1">
    <location>
        <begin position="438"/>
        <end position="458"/>
    </location>
</feature>
<reference key="1">
    <citation type="journal article" date="2005" name="Science">
        <title>Genome streamlining in a cosmopolitan oceanic bacterium.</title>
        <authorList>
            <person name="Giovannoni S.J."/>
            <person name="Tripp H.J."/>
            <person name="Givan S."/>
            <person name="Podar M."/>
            <person name="Vergin K.L."/>
            <person name="Baptista D."/>
            <person name="Bibbs L."/>
            <person name="Eads J."/>
            <person name="Richardson T.H."/>
            <person name="Noordewier M."/>
            <person name="Rappe M.S."/>
            <person name="Short J.M."/>
            <person name="Carrington J.C."/>
            <person name="Mathur E.J."/>
        </authorList>
    </citation>
    <scope>NUCLEOTIDE SEQUENCE [LARGE SCALE GENOMIC DNA]</scope>
    <source>
        <strain>HTCC1062</strain>
    </source>
</reference>
<organism>
    <name type="scientific">Pelagibacter ubique (strain HTCC1062)</name>
    <dbReference type="NCBI Taxonomy" id="335992"/>
    <lineage>
        <taxon>Bacteria</taxon>
        <taxon>Pseudomonadati</taxon>
        <taxon>Pseudomonadota</taxon>
        <taxon>Alphaproteobacteria</taxon>
        <taxon>Candidatus Pelagibacterales</taxon>
        <taxon>Candidatus Pelagibacteraceae</taxon>
        <taxon>Candidatus Pelagibacter</taxon>
    </lineage>
</organism>
<keyword id="KW-0997">Cell inner membrane</keyword>
<keyword id="KW-1003">Cell membrane</keyword>
<keyword id="KW-0472">Membrane</keyword>
<keyword id="KW-0520">NAD</keyword>
<keyword id="KW-0874">Quinone</keyword>
<keyword id="KW-1185">Reference proteome</keyword>
<keyword id="KW-1278">Translocase</keyword>
<keyword id="KW-0812">Transmembrane</keyword>
<keyword id="KW-1133">Transmembrane helix</keyword>
<keyword id="KW-0813">Transport</keyword>
<keyword id="KW-0830">Ubiquinone</keyword>
<proteinExistence type="inferred from homology"/>
<gene>
    <name evidence="1" type="primary">nuoN</name>
    <name type="ordered locus">SAR11_0897</name>
</gene>
<protein>
    <recommendedName>
        <fullName evidence="1">NADH-quinone oxidoreductase subunit N</fullName>
        <ecNumber evidence="1">7.1.1.-</ecNumber>
    </recommendedName>
    <alternativeName>
        <fullName evidence="1">NADH dehydrogenase I subunit N</fullName>
    </alternativeName>
    <alternativeName>
        <fullName evidence="1">NDH-1 subunit N</fullName>
    </alternativeName>
</protein>